<proteinExistence type="inferred from homology"/>
<feature type="chain" id="PRO_1000215989" description="Ubiquinone/menaquinone biosynthesis C-methyltransferase UbiE">
    <location>
        <begin position="1"/>
        <end position="256"/>
    </location>
</feature>
<feature type="binding site" evidence="1">
    <location>
        <position position="79"/>
    </location>
    <ligand>
        <name>S-adenosyl-L-methionine</name>
        <dbReference type="ChEBI" id="CHEBI:59789"/>
    </ligand>
</feature>
<feature type="binding site" evidence="1">
    <location>
        <position position="100"/>
    </location>
    <ligand>
        <name>S-adenosyl-L-methionine</name>
        <dbReference type="ChEBI" id="CHEBI:59789"/>
    </ligand>
</feature>
<feature type="binding site" evidence="1">
    <location>
        <begin position="128"/>
        <end position="129"/>
    </location>
    <ligand>
        <name>S-adenosyl-L-methionine</name>
        <dbReference type="ChEBI" id="CHEBI:59789"/>
    </ligand>
</feature>
<reference key="1">
    <citation type="journal article" date="2009" name="Genome Biol.">
        <title>Genomic and genetic analyses of diversity and plant interactions of Pseudomonas fluorescens.</title>
        <authorList>
            <person name="Silby M.W."/>
            <person name="Cerdeno-Tarraga A.M."/>
            <person name="Vernikos G.S."/>
            <person name="Giddens S.R."/>
            <person name="Jackson R.W."/>
            <person name="Preston G.M."/>
            <person name="Zhang X.-X."/>
            <person name="Moon C.D."/>
            <person name="Gehrig S.M."/>
            <person name="Godfrey S.A.C."/>
            <person name="Knight C.G."/>
            <person name="Malone J.G."/>
            <person name="Robinson Z."/>
            <person name="Spiers A.J."/>
            <person name="Harris S."/>
            <person name="Challis G.L."/>
            <person name="Yaxley A.M."/>
            <person name="Harris D."/>
            <person name="Seeger K."/>
            <person name="Murphy L."/>
            <person name="Rutter S."/>
            <person name="Squares R."/>
            <person name="Quail M.A."/>
            <person name="Saunders E."/>
            <person name="Mavromatis K."/>
            <person name="Brettin T.S."/>
            <person name="Bentley S.D."/>
            <person name="Hothersall J."/>
            <person name="Stephens E."/>
            <person name="Thomas C.M."/>
            <person name="Parkhill J."/>
            <person name="Levy S.B."/>
            <person name="Rainey P.B."/>
            <person name="Thomson N.R."/>
        </authorList>
    </citation>
    <scope>NUCLEOTIDE SEQUENCE [LARGE SCALE GENOMIC DNA]</scope>
    <source>
        <strain>SBW25</strain>
    </source>
</reference>
<accession>C3K8U4</accession>
<dbReference type="EC" id="2.1.1.163" evidence="1"/>
<dbReference type="EC" id="2.1.1.201" evidence="1"/>
<dbReference type="EMBL" id="AM181176">
    <property type="protein sequence ID" value="CAY46666.1"/>
    <property type="molecule type" value="Genomic_DNA"/>
</dbReference>
<dbReference type="RefSeq" id="WP_003171186.1">
    <property type="nucleotide sequence ID" value="NC_012660.1"/>
</dbReference>
<dbReference type="SMR" id="C3K8U4"/>
<dbReference type="STRING" id="294.SRM1_00438"/>
<dbReference type="GeneID" id="93461989"/>
<dbReference type="eggNOG" id="COG2226">
    <property type="taxonomic scope" value="Bacteria"/>
</dbReference>
<dbReference type="HOGENOM" id="CLU_037990_0_0_6"/>
<dbReference type="OrthoDB" id="9808140at2"/>
<dbReference type="UniPathway" id="UPA00079">
    <property type="reaction ID" value="UER00169"/>
</dbReference>
<dbReference type="UniPathway" id="UPA00232"/>
<dbReference type="GO" id="GO:0008425">
    <property type="term" value="F:2-methoxy-6-polyprenyl-1,4-benzoquinol methyltransferase activity"/>
    <property type="evidence" value="ECO:0007669"/>
    <property type="project" value="UniProtKB-UniRule"/>
</dbReference>
<dbReference type="GO" id="GO:0043770">
    <property type="term" value="F:demethylmenaquinone methyltransferase activity"/>
    <property type="evidence" value="ECO:0007669"/>
    <property type="project" value="UniProtKB-UniRule"/>
</dbReference>
<dbReference type="GO" id="GO:0009060">
    <property type="term" value="P:aerobic respiration"/>
    <property type="evidence" value="ECO:0007669"/>
    <property type="project" value="UniProtKB-UniRule"/>
</dbReference>
<dbReference type="GO" id="GO:0009234">
    <property type="term" value="P:menaquinone biosynthetic process"/>
    <property type="evidence" value="ECO:0007669"/>
    <property type="project" value="UniProtKB-UniRule"/>
</dbReference>
<dbReference type="GO" id="GO:0032259">
    <property type="term" value="P:methylation"/>
    <property type="evidence" value="ECO:0007669"/>
    <property type="project" value="UniProtKB-KW"/>
</dbReference>
<dbReference type="CDD" id="cd02440">
    <property type="entry name" value="AdoMet_MTases"/>
    <property type="match status" value="1"/>
</dbReference>
<dbReference type="FunFam" id="3.40.50.150:FF:000014">
    <property type="entry name" value="Ubiquinone/menaquinone biosynthesis C-methyltransferase UbiE"/>
    <property type="match status" value="1"/>
</dbReference>
<dbReference type="Gene3D" id="3.40.50.150">
    <property type="entry name" value="Vaccinia Virus protein VP39"/>
    <property type="match status" value="1"/>
</dbReference>
<dbReference type="HAMAP" id="MF_01813">
    <property type="entry name" value="MenG_UbiE_methyltr"/>
    <property type="match status" value="1"/>
</dbReference>
<dbReference type="InterPro" id="IPR029063">
    <property type="entry name" value="SAM-dependent_MTases_sf"/>
</dbReference>
<dbReference type="InterPro" id="IPR004033">
    <property type="entry name" value="UbiE/COQ5_MeTrFase"/>
</dbReference>
<dbReference type="InterPro" id="IPR023576">
    <property type="entry name" value="UbiE/COQ5_MeTrFase_CS"/>
</dbReference>
<dbReference type="NCBIfam" id="TIGR01934">
    <property type="entry name" value="MenG_MenH_UbiE"/>
    <property type="match status" value="1"/>
</dbReference>
<dbReference type="NCBIfam" id="NF001240">
    <property type="entry name" value="PRK00216.1-1"/>
    <property type="match status" value="1"/>
</dbReference>
<dbReference type="NCBIfam" id="NF001244">
    <property type="entry name" value="PRK00216.1-5"/>
    <property type="match status" value="1"/>
</dbReference>
<dbReference type="PANTHER" id="PTHR43591:SF24">
    <property type="entry name" value="2-METHOXY-6-POLYPRENYL-1,4-BENZOQUINOL METHYLASE, MITOCHONDRIAL"/>
    <property type="match status" value="1"/>
</dbReference>
<dbReference type="PANTHER" id="PTHR43591">
    <property type="entry name" value="METHYLTRANSFERASE"/>
    <property type="match status" value="1"/>
</dbReference>
<dbReference type="Pfam" id="PF01209">
    <property type="entry name" value="Ubie_methyltran"/>
    <property type="match status" value="1"/>
</dbReference>
<dbReference type="SUPFAM" id="SSF53335">
    <property type="entry name" value="S-adenosyl-L-methionine-dependent methyltransferases"/>
    <property type="match status" value="1"/>
</dbReference>
<dbReference type="PROSITE" id="PS51608">
    <property type="entry name" value="SAM_MT_UBIE"/>
    <property type="match status" value="1"/>
</dbReference>
<dbReference type="PROSITE" id="PS01183">
    <property type="entry name" value="UBIE_1"/>
    <property type="match status" value="1"/>
</dbReference>
<dbReference type="PROSITE" id="PS01184">
    <property type="entry name" value="UBIE_2"/>
    <property type="match status" value="1"/>
</dbReference>
<gene>
    <name evidence="1" type="primary">ubiE</name>
    <name type="ordered locus">PFLU_0389</name>
</gene>
<protein>
    <recommendedName>
        <fullName evidence="1">Ubiquinone/menaquinone biosynthesis C-methyltransferase UbiE</fullName>
        <ecNumber evidence="1">2.1.1.163</ecNumber>
        <ecNumber evidence="1">2.1.1.201</ecNumber>
    </recommendedName>
    <alternativeName>
        <fullName evidence="1">2-methoxy-6-polyprenyl-1,4-benzoquinol methylase</fullName>
    </alternativeName>
    <alternativeName>
        <fullName evidence="1">Demethylmenaquinone methyltransferase</fullName>
    </alternativeName>
</protein>
<comment type="function">
    <text evidence="1">Methyltransferase required for the conversion of demethylmenaquinol (DMKH2) to menaquinol (MKH2) and the conversion of 2-polyprenyl-6-methoxy-1,4-benzoquinol (DDMQH2) to 2-polyprenyl-3-methyl-6-methoxy-1,4-benzoquinol (DMQH2).</text>
</comment>
<comment type="catalytic activity">
    <reaction evidence="1">
        <text>a 2-demethylmenaquinol + S-adenosyl-L-methionine = a menaquinol + S-adenosyl-L-homocysteine + H(+)</text>
        <dbReference type="Rhea" id="RHEA:42640"/>
        <dbReference type="Rhea" id="RHEA-COMP:9539"/>
        <dbReference type="Rhea" id="RHEA-COMP:9563"/>
        <dbReference type="ChEBI" id="CHEBI:15378"/>
        <dbReference type="ChEBI" id="CHEBI:18151"/>
        <dbReference type="ChEBI" id="CHEBI:55437"/>
        <dbReference type="ChEBI" id="CHEBI:57856"/>
        <dbReference type="ChEBI" id="CHEBI:59789"/>
        <dbReference type="EC" id="2.1.1.163"/>
    </reaction>
</comment>
<comment type="catalytic activity">
    <reaction evidence="1">
        <text>a 2-methoxy-6-(all-trans-polyprenyl)benzene-1,4-diol + S-adenosyl-L-methionine = a 5-methoxy-2-methyl-3-(all-trans-polyprenyl)benzene-1,4-diol + S-adenosyl-L-homocysteine + H(+)</text>
        <dbReference type="Rhea" id="RHEA:28286"/>
        <dbReference type="Rhea" id="RHEA-COMP:10858"/>
        <dbReference type="Rhea" id="RHEA-COMP:10859"/>
        <dbReference type="ChEBI" id="CHEBI:15378"/>
        <dbReference type="ChEBI" id="CHEBI:57856"/>
        <dbReference type="ChEBI" id="CHEBI:59789"/>
        <dbReference type="ChEBI" id="CHEBI:84166"/>
        <dbReference type="ChEBI" id="CHEBI:84167"/>
        <dbReference type="EC" id="2.1.1.201"/>
    </reaction>
</comment>
<comment type="pathway">
    <text evidence="1">Quinol/quinone metabolism; menaquinone biosynthesis; menaquinol from 1,4-dihydroxy-2-naphthoate: step 2/2.</text>
</comment>
<comment type="pathway">
    <text evidence="1">Cofactor biosynthesis; ubiquinone biosynthesis.</text>
</comment>
<comment type="similarity">
    <text evidence="1">Belongs to the class I-like SAM-binding methyltransferase superfamily. MenG/UbiE family.</text>
</comment>
<organism>
    <name type="scientific">Pseudomonas fluorescens (strain SBW25)</name>
    <dbReference type="NCBI Taxonomy" id="216595"/>
    <lineage>
        <taxon>Bacteria</taxon>
        <taxon>Pseudomonadati</taxon>
        <taxon>Pseudomonadota</taxon>
        <taxon>Gammaproteobacteria</taxon>
        <taxon>Pseudomonadales</taxon>
        <taxon>Pseudomonadaceae</taxon>
        <taxon>Pseudomonas</taxon>
    </lineage>
</organism>
<keyword id="KW-0474">Menaquinone biosynthesis</keyword>
<keyword id="KW-0489">Methyltransferase</keyword>
<keyword id="KW-0949">S-adenosyl-L-methionine</keyword>
<keyword id="KW-0808">Transferase</keyword>
<keyword id="KW-0831">Ubiquinone biosynthesis</keyword>
<sequence>MTDQRKGSDAEPTTHFGFKNVPESQKAEKVAEVFHSVAAKYDLMNDVLSGGMHRLWKRFTIELSGVRTGNRVLDIAGGTGDLAAKFSKLVGPTGQVVLADINGSMLKVGRDRLLDKGVAGNIEFVQADAEKLPFPDNHFDCVTIAFGLRNVTHKEDAIRSMLRVLKPGGRLLVLEFSKPTNALMSKVYDTYSFAFMPLMGKLITNDAESYRYLAESIRMHPDQETLKSMMVEAGFDRVTYHNMTSGIVALHRGIKP</sequence>
<evidence type="ECO:0000255" key="1">
    <source>
        <dbReference type="HAMAP-Rule" id="MF_01813"/>
    </source>
</evidence>
<name>UBIE_PSEFS</name>